<organism>
    <name type="scientific">Homo sapiens</name>
    <name type="common">Human</name>
    <dbReference type="NCBI Taxonomy" id="9606"/>
    <lineage>
        <taxon>Eukaryota</taxon>
        <taxon>Metazoa</taxon>
        <taxon>Chordata</taxon>
        <taxon>Craniata</taxon>
        <taxon>Vertebrata</taxon>
        <taxon>Euteleostomi</taxon>
        <taxon>Mammalia</taxon>
        <taxon>Eutheria</taxon>
        <taxon>Euarchontoglires</taxon>
        <taxon>Primates</taxon>
        <taxon>Haplorrhini</taxon>
        <taxon>Catarrhini</taxon>
        <taxon>Hominidae</taxon>
        <taxon>Homo</taxon>
    </lineage>
</organism>
<name>EYA1_HUMAN</name>
<sequence>MEMQDLTSPHSRLSGSSESPSGPKLGNSHINSNSMTPNGTEVKTEPMSSSETASTTADGSLNNFSGSAIGSSSFSPRPTHQFSPPQIYPSNRPYPHILPTPSSQTMAAYGQTQFTTGMQQATAYATYPQPGQPYGISSYGALWAGIKTEGGLSQSQSPGQTGFLSYGTSFSTPQPGQAPYSYQMQGSSFTTSSGIYTGNNSLTNSSGFNSSQQDYPSYPSFGQGQYAQYYNSSPYPAHYMTSSNTSPTTPSTNATYQLQEPPSGITSQAVTDPTAEYSTIHSPSTPIKDSDSDRLRRGSDGKSRGRGRRNNNPSPPPDSDLERVFIWDLDETIIVFHSLLTGSYANRYGRDPPTSVSLGLRMEEMIFNLADTHLFFNDLEECDQVHIDDVSSDDNGQDLSTYNFGTDGFPAAATSANLCLATGVRGGVDWMRKLAFRYRRVKEIYNTYKNNVGGLLGPAKREAWLQLRAEIEALTDSWLTLALKALSLIHSRTNCVNILVTTTQLIPALAKVLLYGLGIVFPIENIYSATKIGKESCFERIIQRFGRKVVYVVIGDGVEEEQGAKKHAMPFWRISSHSDLMALHHALELEYL</sequence>
<feature type="chain" id="PRO_0000218643" description="Protein phosphatase EYA1">
    <location>
        <begin position="1"/>
        <end position="592"/>
    </location>
</feature>
<feature type="region of interest" description="Disordered" evidence="4">
    <location>
        <begin position="1"/>
        <end position="95"/>
    </location>
</feature>
<feature type="region of interest" description="Disordered" evidence="4">
    <location>
        <begin position="240"/>
        <end position="320"/>
    </location>
</feature>
<feature type="compositionally biased region" description="Low complexity" evidence="4">
    <location>
        <begin position="8"/>
        <end position="26"/>
    </location>
</feature>
<feature type="compositionally biased region" description="Polar residues" evidence="4">
    <location>
        <begin position="28"/>
        <end position="63"/>
    </location>
</feature>
<feature type="compositionally biased region" description="Low complexity" evidence="4">
    <location>
        <begin position="64"/>
        <end position="75"/>
    </location>
</feature>
<feature type="compositionally biased region" description="Low complexity" evidence="4">
    <location>
        <begin position="241"/>
        <end position="253"/>
    </location>
</feature>
<feature type="compositionally biased region" description="Polar residues" evidence="4">
    <location>
        <begin position="254"/>
        <end position="287"/>
    </location>
</feature>
<feature type="compositionally biased region" description="Basic and acidic residues" evidence="4">
    <location>
        <begin position="288"/>
        <end position="303"/>
    </location>
</feature>
<feature type="active site" description="Nucleophile" evidence="2">
    <location>
        <position position="328"/>
    </location>
</feature>
<feature type="active site" description="Proton donor" evidence="2">
    <location>
        <position position="330"/>
    </location>
</feature>
<feature type="binding site" evidence="2">
    <location>
        <position position="328"/>
    </location>
    <ligand>
        <name>Mg(2+)</name>
        <dbReference type="ChEBI" id="CHEBI:18420"/>
    </ligand>
</feature>
<feature type="binding site" evidence="2">
    <location>
        <position position="330"/>
    </location>
    <ligand>
        <name>Mg(2+)</name>
        <dbReference type="ChEBI" id="CHEBI:18420"/>
    </ligand>
</feature>
<feature type="binding site" evidence="2">
    <location>
        <position position="556"/>
    </location>
    <ligand>
        <name>Mg(2+)</name>
        <dbReference type="ChEBI" id="CHEBI:18420"/>
    </ligand>
</feature>
<feature type="splice variant" id="VSP_001486" description="In isoform EYA1B." evidence="20">
    <original>MEMQDLTSPHSRLSGSSESPSGPKLGNSHINSNSMTPNGTE</original>
    <variation>MLLFPQVA</variation>
    <location>
        <begin position="1"/>
        <end position="41"/>
    </location>
</feature>
<feature type="splice variant" id="VSP_045793" description="In isoform EYA1D." evidence="19">
    <location>
        <begin position="140"/>
        <end position="144"/>
    </location>
</feature>
<feature type="splice variant" id="VSP_045794" description="In isoform EYA1D." evidence="19">
    <location>
        <begin position="351"/>
        <end position="380"/>
    </location>
</feature>
<feature type="sequence variant" id="VAR_024439" description="In dbSNP:rs1445404.">
    <original>P</original>
    <variation>A</variation>
    <location>
        <position position="20"/>
    </location>
</feature>
<feature type="sequence variant" id="VAR_070033" description="Found in a patient with congenital cataract; dbSNP:rs561111097." evidence="16">
    <original>E</original>
    <variation>K</variation>
    <location>
        <position position="41"/>
    </location>
</feature>
<feature type="sequence variant" id="VAR_064942" description="In BOR1." evidence="15">
    <original>P</original>
    <variation>S</variation>
    <location>
        <position position="95"/>
    </location>
</feature>
<feature type="sequence variant" id="VAR_064943" description="In BOR1." evidence="15">
    <original>G</original>
    <variation>S</variation>
    <location>
        <position position="140"/>
    </location>
</feature>
<feature type="sequence variant" id="VAR_044452" description="In BOS1; dbSNP:rs191838840." evidence="11">
    <original>S</original>
    <variation>G</variation>
    <location>
        <position position="242"/>
    </location>
</feature>
<feature type="sequence variant" id="VAR_016864" description="In ASA; dbSNP:rs121909198." evidence="6">
    <original>E</original>
    <variation>K</variation>
    <location>
        <position position="363"/>
    </location>
</feature>
<feature type="sequence variant" id="VAR_064944" description="In BOR1." evidence="15">
    <original>E</original>
    <variation>V</variation>
    <location>
        <position position="363"/>
    </location>
</feature>
<feature type="sequence variant" id="VAR_016865" description="In BOR1; with cataract; dbSNP:rs121909199." evidence="6">
    <original>G</original>
    <variation>S</variation>
    <location>
        <position position="426"/>
    </location>
</feature>
<feature type="sequence variant" id="VAR_016866" description="In BOR1." evidence="9">
    <original>D</original>
    <variation>G</variation>
    <location>
        <position position="429"/>
    </location>
</feature>
<feature type="sequence variant" id="VAR_016867" description="In BOR1; dbSNP:rs121909196." evidence="5 15">
    <original>R</original>
    <variation>Q</variation>
    <location>
        <position position="440"/>
    </location>
</feature>
<feature type="sequence variant" id="VAR_005203" description="In BOR1; dbSNP:rs121909200." evidence="18">
    <original>S</original>
    <variation>P</variation>
    <location>
        <position position="487"/>
    </location>
</feature>
<feature type="sequence variant" id="VAR_005204" description="In BOR1; dbSNP:rs121909201." evidence="18">
    <original>L</original>
    <variation>R</variation>
    <location>
        <position position="505"/>
    </location>
</feature>
<feature type="sequence variant" id="VAR_064945" description="In BOR1; dbSNP:rs112340154." evidence="15">
    <original>L</original>
    <variation>P</variation>
    <location>
        <position position="514"/>
    </location>
</feature>
<feature type="sequence variant" id="VAR_064946" description="In BOR1." evidence="15">
    <original>Y</original>
    <variation>C</variation>
    <location>
        <position position="527"/>
    </location>
</feature>
<feature type="sequence variant" id="VAR_016868" description="In ASA; with cataract; dbSNP:rs121909197." evidence="6">
    <original>R</original>
    <variation>G</variation>
    <location>
        <position position="547"/>
    </location>
</feature>
<feature type="sequence variant" id="VAR_064947" description="In BOR1." evidence="15">
    <original>M</original>
    <variation>T</variation>
    <location>
        <position position="569"/>
    </location>
</feature>
<feature type="sequence variant" id="VAR_016869" description="In BOR1; dbSNP:rs397517920." evidence="7">
    <original>L</original>
    <variation>P</variation>
    <location>
        <position position="583"/>
    </location>
</feature>
<feature type="mutagenesis site" description="Loss of tyrosine phosphatase activity toward H2AX." evidence="14">
    <original>D</original>
    <variation>A</variation>
    <location>
        <position position="328"/>
    </location>
</feature>
<feature type="sequence conflict" description="In Ref. 3; AAL73437." evidence="20" ref="3">
    <original>N</original>
    <variation>D</variation>
    <location>
        <position position="33"/>
    </location>
</feature>
<comment type="function">
    <text evidence="3 14">Functions both as protein phosphatase and as transcriptional coactivator for SIX1, and probably also for SIX2, SIX4 and SIX5 (By similarity). Tyrosine phosphatase that dephosphorylates 'Tyr-142' of histone H2AX (H2AXY142ph) and promotes efficient DNA repair via the recruitment of DNA repair complexes containing MDC1. 'Tyr-142' phosphorylation of histone H2AX plays a central role in DNA repair and acts as a mark that distinguishes between apoptotic and repair responses to genotoxic stress (PubMed:19234442). Its function as histone phosphatase may contribute to its function in transcription regulation during organogenesis (By similarity). Also has phosphatase activity with proteins phosphorylated on Ser and Thr residues (in vitro) (By similarity). Required for normal embryonic development of the craniofacial and trunk skeleton, kidneys and ears (By similarity). Together with SIX1, it plays an important role in hypaxial muscle development; in this it is functionally redundant with EYA2 (By similarity).</text>
</comment>
<comment type="catalytic activity">
    <reaction evidence="14">
        <text>O-phospho-L-tyrosyl-[protein] + H2O = L-tyrosyl-[protein] + phosphate</text>
        <dbReference type="Rhea" id="RHEA:10684"/>
        <dbReference type="Rhea" id="RHEA-COMP:10136"/>
        <dbReference type="Rhea" id="RHEA-COMP:20101"/>
        <dbReference type="ChEBI" id="CHEBI:15377"/>
        <dbReference type="ChEBI" id="CHEBI:43474"/>
        <dbReference type="ChEBI" id="CHEBI:46858"/>
        <dbReference type="ChEBI" id="CHEBI:61978"/>
        <dbReference type="EC" id="3.1.3.48"/>
    </reaction>
</comment>
<comment type="catalytic activity">
    <reaction evidence="14">
        <text>O-phospho-L-seryl-[protein] + H2O = L-seryl-[protein] + phosphate</text>
        <dbReference type="Rhea" id="RHEA:20629"/>
        <dbReference type="Rhea" id="RHEA-COMP:9863"/>
        <dbReference type="Rhea" id="RHEA-COMP:11604"/>
        <dbReference type="ChEBI" id="CHEBI:15377"/>
        <dbReference type="ChEBI" id="CHEBI:29999"/>
        <dbReference type="ChEBI" id="CHEBI:43474"/>
        <dbReference type="ChEBI" id="CHEBI:83421"/>
        <dbReference type="EC" id="3.1.3.16"/>
    </reaction>
</comment>
<comment type="catalytic activity">
    <reaction evidence="14">
        <text>O-phospho-L-threonyl-[protein] + H2O = L-threonyl-[protein] + phosphate</text>
        <dbReference type="Rhea" id="RHEA:47004"/>
        <dbReference type="Rhea" id="RHEA-COMP:11060"/>
        <dbReference type="Rhea" id="RHEA-COMP:11605"/>
        <dbReference type="ChEBI" id="CHEBI:15377"/>
        <dbReference type="ChEBI" id="CHEBI:30013"/>
        <dbReference type="ChEBI" id="CHEBI:43474"/>
        <dbReference type="ChEBI" id="CHEBI:61977"/>
        <dbReference type="EC" id="3.1.3.16"/>
    </reaction>
</comment>
<comment type="cofactor">
    <cofactor evidence="2">
        <name>Mg(2+)</name>
        <dbReference type="ChEBI" id="CHEBI:18420"/>
    </cofactor>
    <text evidence="2">Binds 1 Mg(2+) ion per subunit.</text>
</comment>
<comment type="subunit">
    <text evidence="3">Probably interacts with SIX2, SIX4 and SIX5. Interacts with H2AX in response to DNA damage. Interacts with SIX3; promotes EYA1 translocation to the nucleus.</text>
</comment>
<comment type="interaction">
    <interactant intactId="EBI-12244764">
        <id>Q99502</id>
    </interactant>
    <interactant intactId="EBI-743675">
        <id>Q15475</id>
        <label>SIX1</label>
    </interactant>
    <organismsDiffer>false</organismsDiffer>
    <experiments>5</experiments>
</comment>
<comment type="subcellular location">
    <subcellularLocation>
        <location evidence="10">Cytoplasm</location>
    </subcellularLocation>
    <subcellularLocation>
        <location evidence="10 14">Nucleus</location>
    </subcellularLocation>
    <text evidence="14">Localizes at sites of DNA damage at double-strand breaks (DSBs).</text>
</comment>
<comment type="alternative products">
    <event type="alternative splicing"/>
    <isoform>
        <id>Q99502-1</id>
        <name>EYA1A</name>
        <sequence type="displayed"/>
    </isoform>
    <isoform>
        <id>Q99502-2</id>
        <name>EYA1B</name>
        <sequence type="described" ref="VSP_001486"/>
    </isoform>
    <isoform>
        <id>Q99502-3</id>
        <name>EYA1D</name>
        <sequence type="described" ref="VSP_045793 VSP_045794"/>
    </isoform>
</comment>
<comment type="tissue specificity">
    <text>In the embryo, highly expressed in kidney with lower levels in brain. Weakly expressed in lung. In the adult, highly expressed in heart and skeletal muscle. Weakly expressed in brain and liver. No expression in eye or kidney.</text>
</comment>
<comment type="developmental stage">
    <text evidence="10">Detected in cytoplasm of somite cells at the beginning of fourth week of development. Detected in cytoplasm of limb bud cell between the sixth and eighth week of development.</text>
</comment>
<comment type="PTM">
    <text evidence="1">Sumoylated with SUMO1.</text>
</comment>
<comment type="disease" evidence="5 6 7 9 15 18">
    <disease id="DI-01297">
        <name>Branchiootorenal syndrome 1</name>
        <acronym>BOR1</acronym>
        <description>A syndrome characterized by branchial cleft fistulas or cysts, sensorineural and/or conductive hearing loss, pre-auricular pits, structural defects of the outer, middle or inner ear, and renal malformations.</description>
        <dbReference type="MIM" id="113650"/>
    </disease>
    <text>The disease is caused by variants affecting the gene represented in this entry.</text>
</comment>
<comment type="disease" evidence="8 12">
    <disease id="DI-02112">
        <name>Otofaciocervical syndrome 1</name>
        <acronym>OTFCS1</acronym>
        <description>A disorder characterized by facial dysmorphism, cup-shaped low-set ears, preauricular fistulas, hearing loss, branchial defects, skeletal anomalies including vertebral defects, low-set clavicles, winged scapulae, sloping shoulders, and mild intellectual disability.</description>
        <dbReference type="MIM" id="166780"/>
    </disease>
    <text>The disease is caused by variants affecting the gene represented in this entry.</text>
</comment>
<comment type="disease" evidence="11 13 17">
    <disease id="DI-01295">
        <name>Branchiootic syndrome 1</name>
        <acronym>BOS1</acronym>
        <description>A syndrome characterized by usually bilateral branchial cleft fistulas or cysts, sensorineural and/or conductive hearing loss, pre-auricular pits, and structural defects of the outer, middle or inner ear. Otic defects include malformed and hypoplastic pinnae, a narrowed external ear canal, bulbous internal auditory canal, stapes fixation, malformed and hypoplastic cochlea. Branchial and otic anomalies overlap with those seen in individuals with the branchiootorenal syndrome. However renal anomalies are absent in branchiootic syndrome patients.</description>
        <dbReference type="MIM" id="602588"/>
    </disease>
    <text>The disease is caused by variants affecting the gene represented in this entry.</text>
</comment>
<comment type="disease" evidence="6">
    <disease id="DI-03442">
        <name>Anterior segment anomalies with or without cataract</name>
        <acronym>ASA</acronym>
        <description>A disease characterized by various types of developmental eye anomalies, in the absence of other abnormalities. The phenotypic spectrum of anterior segment anomalies include central corneal opacity, Peters anomaly, and bilateral persistence of the pupillary membrane. Some patients have cataract.</description>
        <dbReference type="MIM" id="602588"/>
    </disease>
    <text>The disease is caused by variants affecting the gene represented in this entry.</text>
</comment>
<comment type="similarity">
    <text evidence="20">Belongs to the HAD-like hydrolase superfamily. EYA family.</text>
</comment>
<evidence type="ECO:0000250" key="1"/>
<evidence type="ECO:0000250" key="2">
    <source>
        <dbReference type="UniProtKB" id="O00167"/>
    </source>
</evidence>
<evidence type="ECO:0000250" key="3">
    <source>
        <dbReference type="UniProtKB" id="P97767"/>
    </source>
</evidence>
<evidence type="ECO:0000256" key="4">
    <source>
        <dbReference type="SAM" id="MobiDB-lite"/>
    </source>
</evidence>
<evidence type="ECO:0000269" key="5">
    <source>
    </source>
</evidence>
<evidence type="ECO:0000269" key="6">
    <source>
    </source>
</evidence>
<evidence type="ECO:0000269" key="7">
    <source>
    </source>
</evidence>
<evidence type="ECO:0000269" key="8">
    <source>
    </source>
</evidence>
<evidence type="ECO:0000269" key="9">
    <source>
    </source>
</evidence>
<evidence type="ECO:0000269" key="10">
    <source>
    </source>
</evidence>
<evidence type="ECO:0000269" key="11">
    <source>
    </source>
</evidence>
<evidence type="ECO:0000269" key="12">
    <source>
    </source>
</evidence>
<evidence type="ECO:0000269" key="13">
    <source>
    </source>
</evidence>
<evidence type="ECO:0000269" key="14">
    <source>
    </source>
</evidence>
<evidence type="ECO:0000269" key="15">
    <source>
    </source>
</evidence>
<evidence type="ECO:0000269" key="16">
    <source>
    </source>
</evidence>
<evidence type="ECO:0000269" key="17">
    <source>
    </source>
</evidence>
<evidence type="ECO:0000269" key="18">
    <source>
    </source>
</evidence>
<evidence type="ECO:0000303" key="19">
    <source ref="3"/>
</evidence>
<evidence type="ECO:0000305" key="20"/>
<dbReference type="EC" id="3.1.3.16" evidence="14"/>
<dbReference type="EC" id="3.1.3.48" evidence="14"/>
<dbReference type="EMBL" id="Y10260">
    <property type="protein sequence ID" value="CAA71309.1"/>
    <property type="molecule type" value="Genomic_DNA"/>
</dbReference>
<dbReference type="EMBL" id="AJ000097">
    <property type="protein sequence ID" value="CAA03922.1"/>
    <property type="molecule type" value="mRNA"/>
</dbReference>
<dbReference type="EMBL" id="AJ000098">
    <property type="protein sequence ID" value="CAA03923.1"/>
    <property type="molecule type" value="mRNA"/>
</dbReference>
<dbReference type="EMBL" id="AF467247">
    <property type="protein sequence ID" value="AAL73437.1"/>
    <property type="molecule type" value="mRNA"/>
</dbReference>
<dbReference type="EMBL" id="AC016465">
    <property type="status" value="NOT_ANNOTATED_CDS"/>
    <property type="molecule type" value="Genomic_DNA"/>
</dbReference>
<dbReference type="EMBL" id="AC022858">
    <property type="status" value="NOT_ANNOTATED_CDS"/>
    <property type="molecule type" value="Genomic_DNA"/>
</dbReference>
<dbReference type="EMBL" id="CH471068">
    <property type="protein sequence ID" value="EAW86976.1"/>
    <property type="molecule type" value="Genomic_DNA"/>
</dbReference>
<dbReference type="EMBL" id="BC121799">
    <property type="protein sequence ID" value="AAI21800.1"/>
    <property type="molecule type" value="mRNA"/>
</dbReference>
<dbReference type="CCDS" id="CCDS34906.1">
    <molecule id="Q99502-1"/>
</dbReference>
<dbReference type="CCDS" id="CCDS47873.1">
    <molecule id="Q99502-2"/>
</dbReference>
<dbReference type="RefSeq" id="NP_000494.2">
    <molecule id="Q99502-1"/>
    <property type="nucleotide sequence ID" value="NM_000503.5"/>
</dbReference>
<dbReference type="RefSeq" id="NP_001275503.1">
    <property type="nucleotide sequence ID" value="NM_001288574.1"/>
</dbReference>
<dbReference type="RefSeq" id="NP_001275504.1">
    <property type="nucleotide sequence ID" value="NM_001288575.1"/>
</dbReference>
<dbReference type="RefSeq" id="NP_001357263.1">
    <molecule id="Q99502-1"/>
    <property type="nucleotide sequence ID" value="NM_001370334.1"/>
</dbReference>
<dbReference type="RefSeq" id="NP_001357264.1">
    <molecule id="Q99502-1"/>
    <property type="nucleotide sequence ID" value="NM_001370335.1"/>
</dbReference>
<dbReference type="RefSeq" id="NP_001398726.1">
    <molecule id="Q99502-2"/>
    <property type="nucleotide sequence ID" value="NM_001411797.1"/>
</dbReference>
<dbReference type="RefSeq" id="NP_742055.1">
    <molecule id="Q99502-1"/>
    <property type="nucleotide sequence ID" value="NM_172058.4"/>
</dbReference>
<dbReference type="RefSeq" id="NP_742056.1">
    <property type="nucleotide sequence ID" value="NM_172059.3"/>
</dbReference>
<dbReference type="RefSeq" id="NP_742057.1">
    <molecule id="Q99502-2"/>
    <property type="nucleotide sequence ID" value="NM_172060.4"/>
</dbReference>
<dbReference type="RefSeq" id="XP_016868695.1">
    <property type="nucleotide sequence ID" value="XM_017013206.1"/>
</dbReference>
<dbReference type="RefSeq" id="XP_016868701.1">
    <property type="nucleotide sequence ID" value="XM_017013212.1"/>
</dbReference>
<dbReference type="RefSeq" id="XP_047277486.1">
    <molecule id="Q99502-2"/>
    <property type="nucleotide sequence ID" value="XM_047421530.1"/>
</dbReference>
<dbReference type="RefSeq" id="XP_054216025.1">
    <molecule id="Q99502-2"/>
    <property type="nucleotide sequence ID" value="XM_054360050.1"/>
</dbReference>
<dbReference type="SMR" id="Q99502"/>
<dbReference type="BioGRID" id="108439">
    <property type="interactions" value="45"/>
</dbReference>
<dbReference type="CORUM" id="Q99502"/>
<dbReference type="DIP" id="DIP-60446N"/>
<dbReference type="FunCoup" id="Q99502">
    <property type="interactions" value="3337"/>
</dbReference>
<dbReference type="IntAct" id="Q99502">
    <property type="interactions" value="22"/>
</dbReference>
<dbReference type="MINT" id="Q99502"/>
<dbReference type="STRING" id="9606.ENSP00000496255"/>
<dbReference type="DEPOD" id="EYA1"/>
<dbReference type="GlyGen" id="Q99502">
    <property type="glycosylation" value="1 site"/>
</dbReference>
<dbReference type="iPTMnet" id="Q99502"/>
<dbReference type="PhosphoSitePlus" id="Q99502"/>
<dbReference type="BioMuta" id="EYA1"/>
<dbReference type="DMDM" id="3183005"/>
<dbReference type="jPOST" id="Q99502"/>
<dbReference type="MassIVE" id="Q99502"/>
<dbReference type="PaxDb" id="9606-ENSP00000342626"/>
<dbReference type="PeptideAtlas" id="Q99502"/>
<dbReference type="ProteomicsDB" id="34020"/>
<dbReference type="ProteomicsDB" id="78303">
    <molecule id="Q99502-1"/>
</dbReference>
<dbReference type="ProteomicsDB" id="78304">
    <molecule id="Q99502-2"/>
</dbReference>
<dbReference type="Antibodypedia" id="25098">
    <property type="antibodies" value="221 antibodies from 30 providers"/>
</dbReference>
<dbReference type="DNASU" id="2138"/>
<dbReference type="Ensembl" id="ENST00000340726.8">
    <molecule id="Q99502-1"/>
    <property type="protein sequence ID" value="ENSP00000342626.3"/>
    <property type="gene ID" value="ENSG00000104313.20"/>
</dbReference>
<dbReference type="Ensembl" id="ENST00000388740.4">
    <molecule id="Q99502-2"/>
    <property type="protein sequence ID" value="ENSP00000373392.3"/>
    <property type="gene ID" value="ENSG00000104313.20"/>
</dbReference>
<dbReference type="Ensembl" id="ENST00000388742.8">
    <molecule id="Q99502-1"/>
    <property type="protein sequence ID" value="ENSP00000373394.4"/>
    <property type="gene ID" value="ENSG00000104313.20"/>
</dbReference>
<dbReference type="Ensembl" id="ENST00000419131.6">
    <molecule id="Q99502-3"/>
    <property type="protein sequence ID" value="ENSP00000410176.1"/>
    <property type="gene ID" value="ENSG00000104313.20"/>
</dbReference>
<dbReference type="Ensembl" id="ENST00000645793.1">
    <molecule id="Q99502-1"/>
    <property type="protein sequence ID" value="ENSP00000496255.1"/>
    <property type="gene ID" value="ENSG00000104313.20"/>
</dbReference>
<dbReference type="Ensembl" id="ENST00000647540.1">
    <molecule id="Q99502-1"/>
    <property type="protein sequence ID" value="ENSP00000494438.1"/>
    <property type="gene ID" value="ENSG00000104313.20"/>
</dbReference>
<dbReference type="GeneID" id="2138"/>
<dbReference type="KEGG" id="hsa:2138"/>
<dbReference type="MANE-Select" id="ENST00000340726.8">
    <property type="protein sequence ID" value="ENSP00000342626.3"/>
    <property type="RefSeq nucleotide sequence ID" value="NM_000503.6"/>
    <property type="RefSeq protein sequence ID" value="NP_000494.2"/>
</dbReference>
<dbReference type="UCSC" id="uc003xyr.6">
    <molecule id="Q99502-1"/>
    <property type="organism name" value="human"/>
</dbReference>
<dbReference type="AGR" id="HGNC:3519"/>
<dbReference type="CTD" id="2138"/>
<dbReference type="DisGeNET" id="2138"/>
<dbReference type="GeneCards" id="EYA1"/>
<dbReference type="GeneReviews" id="EYA1"/>
<dbReference type="HGNC" id="HGNC:3519">
    <property type="gene designation" value="EYA1"/>
</dbReference>
<dbReference type="HPA" id="ENSG00000104313">
    <property type="expression patterns" value="Tissue enhanced (choroid plexus, parathyroid gland)"/>
</dbReference>
<dbReference type="MalaCards" id="EYA1"/>
<dbReference type="MIM" id="113650">
    <property type="type" value="phenotype"/>
</dbReference>
<dbReference type="MIM" id="166780">
    <property type="type" value="phenotype"/>
</dbReference>
<dbReference type="MIM" id="601653">
    <property type="type" value="gene"/>
</dbReference>
<dbReference type="MIM" id="602588">
    <property type="type" value="phenotype"/>
</dbReference>
<dbReference type="neXtProt" id="NX_Q99502"/>
<dbReference type="OpenTargets" id="ENSG00000104313"/>
<dbReference type="Orphanet" id="107">
    <property type="disease" value="BOR syndrome"/>
</dbReference>
<dbReference type="Orphanet" id="52429">
    <property type="disease" value="Branchiootic syndrome"/>
</dbReference>
<dbReference type="Orphanet" id="2792">
    <property type="disease" value="Otofaciocervical syndrome"/>
</dbReference>
<dbReference type="PharmGKB" id="PA27931"/>
<dbReference type="VEuPathDB" id="HostDB:ENSG00000104313"/>
<dbReference type="eggNOG" id="KOG3107">
    <property type="taxonomic scope" value="Eukaryota"/>
</dbReference>
<dbReference type="GeneTree" id="ENSGT00950000182978"/>
<dbReference type="InParanoid" id="Q99502"/>
<dbReference type="OMA" id="QCASANN"/>
<dbReference type="OrthoDB" id="167668at2759"/>
<dbReference type="PAN-GO" id="Q99502">
    <property type="GO annotations" value="7 GO annotations based on evolutionary models"/>
</dbReference>
<dbReference type="PhylomeDB" id="Q99502"/>
<dbReference type="TreeFam" id="TF319337"/>
<dbReference type="PathwayCommons" id="Q99502"/>
<dbReference type="Reactome" id="R-HSA-5693565">
    <property type="pathway name" value="Recruitment and ATM-mediated phosphorylation of repair and signaling proteins at DNA double strand breaks"/>
</dbReference>
<dbReference type="Reactome" id="R-HSA-9830674">
    <property type="pathway name" value="Formation of the ureteric bud"/>
</dbReference>
<dbReference type="SignaLink" id="Q99502"/>
<dbReference type="SIGNOR" id="Q99502"/>
<dbReference type="BioGRID-ORCS" id="2138">
    <property type="hits" value="8 hits in 1165 CRISPR screens"/>
</dbReference>
<dbReference type="ChiTaRS" id="EYA1">
    <property type="organism name" value="human"/>
</dbReference>
<dbReference type="GeneWiki" id="EYA1"/>
<dbReference type="GenomeRNAi" id="2138"/>
<dbReference type="Pharos" id="Q99502">
    <property type="development level" value="Tbio"/>
</dbReference>
<dbReference type="PRO" id="PR:Q99502"/>
<dbReference type="Proteomes" id="UP000005640">
    <property type="component" value="Chromosome 8"/>
</dbReference>
<dbReference type="RNAct" id="Q99502">
    <property type="molecule type" value="protein"/>
</dbReference>
<dbReference type="Bgee" id="ENSG00000104313">
    <property type="expression patterns" value="Expressed in choroid plexus epithelium and 150 other cell types or tissues"/>
</dbReference>
<dbReference type="ExpressionAtlas" id="Q99502">
    <property type="expression patterns" value="baseline and differential"/>
</dbReference>
<dbReference type="GO" id="GO:0005737">
    <property type="term" value="C:cytoplasm"/>
    <property type="evidence" value="ECO:0000314"/>
    <property type="project" value="UniProtKB"/>
</dbReference>
<dbReference type="GO" id="GO:0016604">
    <property type="term" value="C:nuclear body"/>
    <property type="evidence" value="ECO:0000314"/>
    <property type="project" value="HPA"/>
</dbReference>
<dbReference type="GO" id="GO:0005654">
    <property type="term" value="C:nucleoplasm"/>
    <property type="evidence" value="ECO:0000314"/>
    <property type="project" value="HPA"/>
</dbReference>
<dbReference type="GO" id="GO:0005634">
    <property type="term" value="C:nucleus"/>
    <property type="evidence" value="ECO:0000314"/>
    <property type="project" value="UniProtKB"/>
</dbReference>
<dbReference type="GO" id="GO:0032993">
    <property type="term" value="C:protein-DNA complex"/>
    <property type="evidence" value="ECO:0007669"/>
    <property type="project" value="Ensembl"/>
</dbReference>
<dbReference type="GO" id="GO:0140793">
    <property type="term" value="F:histone H2AXY142 phosphatase activity"/>
    <property type="evidence" value="ECO:0000314"/>
    <property type="project" value="UniProtKB"/>
</dbReference>
<dbReference type="GO" id="GO:0046872">
    <property type="term" value="F:metal ion binding"/>
    <property type="evidence" value="ECO:0007669"/>
    <property type="project" value="UniProtKB-KW"/>
</dbReference>
<dbReference type="GO" id="GO:0004722">
    <property type="term" value="F:protein serine/threonine phosphatase activity"/>
    <property type="evidence" value="ECO:0007669"/>
    <property type="project" value="UniProtKB-EC"/>
</dbReference>
<dbReference type="GO" id="GO:0004725">
    <property type="term" value="F:protein tyrosine phosphatase activity"/>
    <property type="evidence" value="ECO:0000318"/>
    <property type="project" value="GO_Central"/>
</dbReference>
<dbReference type="GO" id="GO:0003723">
    <property type="term" value="F:RNA binding"/>
    <property type="evidence" value="ECO:0007669"/>
    <property type="project" value="Ensembl"/>
</dbReference>
<dbReference type="GO" id="GO:0009653">
    <property type="term" value="P:anatomical structure morphogenesis"/>
    <property type="evidence" value="ECO:0000304"/>
    <property type="project" value="ProtInc"/>
</dbReference>
<dbReference type="GO" id="GO:0035909">
    <property type="term" value="P:aorta morphogenesis"/>
    <property type="evidence" value="ECO:0007669"/>
    <property type="project" value="Ensembl"/>
</dbReference>
<dbReference type="GO" id="GO:0001658">
    <property type="term" value="P:branching involved in ureteric bud morphogenesis"/>
    <property type="evidence" value="ECO:0007669"/>
    <property type="project" value="Ensembl"/>
</dbReference>
<dbReference type="GO" id="GO:0030154">
    <property type="term" value="P:cell differentiation"/>
    <property type="evidence" value="ECO:0000318"/>
    <property type="project" value="GO_Central"/>
</dbReference>
<dbReference type="GO" id="GO:0090103">
    <property type="term" value="P:cochlea morphogenesis"/>
    <property type="evidence" value="ECO:0007669"/>
    <property type="project" value="Ensembl"/>
</dbReference>
<dbReference type="GO" id="GO:0006302">
    <property type="term" value="P:double-strand break repair"/>
    <property type="evidence" value="ECO:0000315"/>
    <property type="project" value="UniProtKB"/>
</dbReference>
<dbReference type="GO" id="GO:0048704">
    <property type="term" value="P:embryonic skeletal system morphogenesis"/>
    <property type="evidence" value="ECO:0007669"/>
    <property type="project" value="Ensembl"/>
</dbReference>
<dbReference type="GO" id="GO:0050673">
    <property type="term" value="P:epithelial cell proliferation"/>
    <property type="evidence" value="ECO:0007669"/>
    <property type="project" value="Ensembl"/>
</dbReference>
<dbReference type="GO" id="GO:0097192">
    <property type="term" value="P:extrinsic apoptotic signaling pathway in absence of ligand"/>
    <property type="evidence" value="ECO:0007669"/>
    <property type="project" value="Ensembl"/>
</dbReference>
<dbReference type="GO" id="GO:0007501">
    <property type="term" value="P:mesodermal cell fate specification"/>
    <property type="evidence" value="ECO:0007669"/>
    <property type="project" value="Ensembl"/>
</dbReference>
<dbReference type="GO" id="GO:0001656">
    <property type="term" value="P:metanephros development"/>
    <property type="evidence" value="ECO:0007669"/>
    <property type="project" value="Ensembl"/>
</dbReference>
<dbReference type="GO" id="GO:0042474">
    <property type="term" value="P:middle ear morphogenesis"/>
    <property type="evidence" value="ECO:0007669"/>
    <property type="project" value="Ensembl"/>
</dbReference>
<dbReference type="GO" id="GO:2001240">
    <property type="term" value="P:negative regulation of extrinsic apoptotic signaling pathway in absence of ligand"/>
    <property type="evidence" value="ECO:0000318"/>
    <property type="project" value="GO_Central"/>
</dbReference>
<dbReference type="GO" id="GO:0048665">
    <property type="term" value="P:neuron fate specification"/>
    <property type="evidence" value="ECO:0007669"/>
    <property type="project" value="Ensembl"/>
</dbReference>
<dbReference type="GO" id="GO:0071600">
    <property type="term" value="P:otic vesicle morphogenesis"/>
    <property type="evidence" value="ECO:0007669"/>
    <property type="project" value="Ensembl"/>
</dbReference>
<dbReference type="GO" id="GO:0042473">
    <property type="term" value="P:outer ear morphogenesis"/>
    <property type="evidence" value="ECO:0007669"/>
    <property type="project" value="Ensembl"/>
</dbReference>
<dbReference type="GO" id="GO:0003151">
    <property type="term" value="P:outflow tract morphogenesis"/>
    <property type="evidence" value="ECO:0007669"/>
    <property type="project" value="Ensembl"/>
</dbReference>
<dbReference type="GO" id="GO:0007389">
    <property type="term" value="P:pattern specification process"/>
    <property type="evidence" value="ECO:0007669"/>
    <property type="project" value="Ensembl"/>
</dbReference>
<dbReference type="GO" id="GO:0060037">
    <property type="term" value="P:pharyngeal system development"/>
    <property type="evidence" value="ECO:0007669"/>
    <property type="project" value="Ensembl"/>
</dbReference>
<dbReference type="GO" id="GO:0045739">
    <property type="term" value="P:positive regulation of DNA repair"/>
    <property type="evidence" value="ECO:0000315"/>
    <property type="project" value="UniProtKB"/>
</dbReference>
<dbReference type="GO" id="GO:0050679">
    <property type="term" value="P:positive regulation of epithelial cell proliferation"/>
    <property type="evidence" value="ECO:0007669"/>
    <property type="project" value="Ensembl"/>
</dbReference>
<dbReference type="GO" id="GO:0072513">
    <property type="term" value="P:positive regulation of secondary heart field cardioblast proliferation"/>
    <property type="evidence" value="ECO:0007669"/>
    <property type="project" value="Ensembl"/>
</dbReference>
<dbReference type="GO" id="GO:0045944">
    <property type="term" value="P:positive regulation of transcription by RNA polymerase II"/>
    <property type="evidence" value="ECO:0007669"/>
    <property type="project" value="Ensembl"/>
</dbReference>
<dbReference type="GO" id="GO:0016925">
    <property type="term" value="P:protein sumoylation"/>
    <property type="evidence" value="ECO:0000250"/>
    <property type="project" value="UniProtKB"/>
</dbReference>
<dbReference type="GO" id="GO:0045664">
    <property type="term" value="P:regulation of neuron differentiation"/>
    <property type="evidence" value="ECO:0007669"/>
    <property type="project" value="Ensembl"/>
</dbReference>
<dbReference type="GO" id="GO:0010212">
    <property type="term" value="P:response to ionizing radiation"/>
    <property type="evidence" value="ECO:0000314"/>
    <property type="project" value="UniProtKB"/>
</dbReference>
<dbReference type="GO" id="GO:0048752">
    <property type="term" value="P:semicircular canal morphogenesis"/>
    <property type="evidence" value="ECO:0007669"/>
    <property type="project" value="Ensembl"/>
</dbReference>
<dbReference type="GO" id="GO:0007605">
    <property type="term" value="P:sensory perception of sound"/>
    <property type="evidence" value="ECO:0000304"/>
    <property type="project" value="ProtInc"/>
</dbReference>
<dbReference type="GO" id="GO:0014706">
    <property type="term" value="P:striated muscle tissue development"/>
    <property type="evidence" value="ECO:0007669"/>
    <property type="project" value="Ensembl"/>
</dbReference>
<dbReference type="CDD" id="cd02601">
    <property type="entry name" value="HAD_Eya"/>
    <property type="match status" value="1"/>
</dbReference>
<dbReference type="FunFam" id="3.40.50.12350:FF:000001">
    <property type="entry name" value="Eyes absent homolog"/>
    <property type="match status" value="1"/>
</dbReference>
<dbReference type="Gene3D" id="3.40.50.12350">
    <property type="match status" value="1"/>
</dbReference>
<dbReference type="InterPro" id="IPR028472">
    <property type="entry name" value="EYA"/>
</dbReference>
<dbReference type="InterPro" id="IPR006545">
    <property type="entry name" value="EYA_dom"/>
</dbReference>
<dbReference type="InterPro" id="IPR042577">
    <property type="entry name" value="EYA_dom_metazoan"/>
</dbReference>
<dbReference type="InterPro" id="IPR038102">
    <property type="entry name" value="EYA_dom_sf"/>
</dbReference>
<dbReference type="NCBIfam" id="TIGR01658">
    <property type="entry name" value="EYA-cons_domain"/>
    <property type="match status" value="1"/>
</dbReference>
<dbReference type="PANTHER" id="PTHR10190">
    <property type="entry name" value="EYES ABSENT"/>
    <property type="match status" value="1"/>
</dbReference>
<dbReference type="PANTHER" id="PTHR10190:SF11">
    <property type="entry name" value="EYES ABSENT HOMOLOG 1"/>
    <property type="match status" value="1"/>
</dbReference>
<dbReference type="Pfam" id="PF00702">
    <property type="entry name" value="Hydrolase"/>
    <property type="match status" value="1"/>
</dbReference>
<dbReference type="SFLD" id="SFLDG01129">
    <property type="entry name" value="C1.5:_HAD__Beta-PGM__Phosphata"/>
    <property type="match status" value="1"/>
</dbReference>
<dbReference type="SFLD" id="SFLDS00003">
    <property type="entry name" value="Haloacid_Dehalogenase"/>
    <property type="match status" value="1"/>
</dbReference>
<reference key="1">
    <citation type="journal article" date="1997" name="Hum. Mol. Genet.">
        <title>Clustering of mutations responsible for branchio-oto-renal (BOR) syndrome in the eyes absent homologous region (eyaHR) of EYA1.</title>
        <authorList>
            <person name="Abdelhak S."/>
            <person name="Kalatzis V."/>
            <person name="Heilig R."/>
            <person name="Compain S."/>
            <person name="Samson D."/>
            <person name="Vincent C."/>
            <person name="Levi-Acobas F."/>
            <person name="Cruaud C."/>
            <person name="le Merrer M."/>
            <person name="Mathieu M."/>
            <person name="Koenig R."/>
            <person name="Vigneron J."/>
            <person name="Weissenbach J."/>
            <person name="Petit C."/>
            <person name="Weil D."/>
        </authorList>
    </citation>
    <scope>NUCLEOTIDE SEQUENCE [MRNA]</scope>
    <scope>ALTERNATIVE SPLICING</scope>
    <scope>VARIANTS BOR1 PRO-487 AND ARG-505</scope>
    <source>
        <tissue>Embryo</tissue>
    </source>
</reference>
<reference key="2">
    <citation type="journal article" date="1997" name="Nat. Genet.">
        <title>A human homologue of the Drosophila eyes absent gene underlies branchio-oto-renal (BOR) syndrome and identifies a novel gene family.</title>
        <authorList>
            <person name="Abdelhak S."/>
            <person name="Kalatzis V."/>
            <person name="Heilig R."/>
            <person name="Compain S."/>
            <person name="Samson D."/>
            <person name="Vincent C."/>
            <person name="Weil D."/>
            <person name="Cruaud C."/>
            <person name="Sahly I."/>
            <person name="Leibovici M."/>
            <person name="Bitner-Glindzicz M."/>
            <person name="Francis M."/>
            <person name="Lacombe D."/>
            <person name="Vigneron J."/>
            <person name="Charachon R."/>
            <person name="Boven K."/>
            <person name="Bedbeder P."/>
            <person name="van Regemorter N."/>
            <person name="Weissenbach J."/>
            <person name="Petit C."/>
        </authorList>
    </citation>
    <scope>NUCLEOTIDE SEQUENCE [GENOMIC DNA / MRNA] (ISOFORM EYA1A)</scope>
    <source>
        <tissue>Embryo</tissue>
    </source>
</reference>
<reference key="3">
    <citation type="submission" date="2002-01" db="EMBL/GenBank/DDBJ databases">
        <title>EYA1D, a novel EYA1 isoform.</title>
        <authorList>
            <person name="Vervoort V.S."/>
            <person name="Schwartz C.E."/>
        </authorList>
    </citation>
    <scope>NUCLEOTIDE SEQUENCE [MRNA] (ISOFORM EYA1D)</scope>
    <scope>ALTERNATIVE SPLICING</scope>
    <source>
        <tissue>Kidney</tissue>
    </source>
</reference>
<reference key="4">
    <citation type="journal article" date="2006" name="Nature">
        <title>DNA sequence and analysis of human chromosome 8.</title>
        <authorList>
            <person name="Nusbaum C."/>
            <person name="Mikkelsen T.S."/>
            <person name="Zody M.C."/>
            <person name="Asakawa S."/>
            <person name="Taudien S."/>
            <person name="Garber M."/>
            <person name="Kodira C.D."/>
            <person name="Schueler M.G."/>
            <person name="Shimizu A."/>
            <person name="Whittaker C.A."/>
            <person name="Chang J.L."/>
            <person name="Cuomo C.A."/>
            <person name="Dewar K."/>
            <person name="FitzGerald M.G."/>
            <person name="Yang X."/>
            <person name="Allen N.R."/>
            <person name="Anderson S."/>
            <person name="Asakawa T."/>
            <person name="Blechschmidt K."/>
            <person name="Bloom T."/>
            <person name="Borowsky M.L."/>
            <person name="Butler J."/>
            <person name="Cook A."/>
            <person name="Corum B."/>
            <person name="DeArellano K."/>
            <person name="DeCaprio D."/>
            <person name="Dooley K.T."/>
            <person name="Dorris L. III"/>
            <person name="Engels R."/>
            <person name="Gloeckner G."/>
            <person name="Hafez N."/>
            <person name="Hagopian D.S."/>
            <person name="Hall J.L."/>
            <person name="Ishikawa S.K."/>
            <person name="Jaffe D.B."/>
            <person name="Kamat A."/>
            <person name="Kudoh J."/>
            <person name="Lehmann R."/>
            <person name="Lokitsang T."/>
            <person name="Macdonald P."/>
            <person name="Major J.E."/>
            <person name="Matthews C.D."/>
            <person name="Mauceli E."/>
            <person name="Menzel U."/>
            <person name="Mihalev A.H."/>
            <person name="Minoshima S."/>
            <person name="Murayama Y."/>
            <person name="Naylor J.W."/>
            <person name="Nicol R."/>
            <person name="Nguyen C."/>
            <person name="O'Leary S.B."/>
            <person name="O'Neill K."/>
            <person name="Parker S.C.J."/>
            <person name="Polley A."/>
            <person name="Raymond C.K."/>
            <person name="Reichwald K."/>
            <person name="Rodriguez J."/>
            <person name="Sasaki T."/>
            <person name="Schilhabel M."/>
            <person name="Siddiqui R."/>
            <person name="Smith C.L."/>
            <person name="Sneddon T.P."/>
            <person name="Talamas J.A."/>
            <person name="Tenzin P."/>
            <person name="Topham K."/>
            <person name="Venkataraman V."/>
            <person name="Wen G."/>
            <person name="Yamazaki S."/>
            <person name="Young S.K."/>
            <person name="Zeng Q."/>
            <person name="Zimmer A.R."/>
            <person name="Rosenthal A."/>
            <person name="Birren B.W."/>
            <person name="Platzer M."/>
            <person name="Shimizu N."/>
            <person name="Lander E.S."/>
        </authorList>
    </citation>
    <scope>NUCLEOTIDE SEQUENCE [LARGE SCALE GENOMIC DNA]</scope>
</reference>
<reference key="5">
    <citation type="submission" date="2005-07" db="EMBL/GenBank/DDBJ databases">
        <authorList>
            <person name="Mural R.J."/>
            <person name="Istrail S."/>
            <person name="Sutton G."/>
            <person name="Florea L."/>
            <person name="Halpern A.L."/>
            <person name="Mobarry C.M."/>
            <person name="Lippert R."/>
            <person name="Walenz B."/>
            <person name="Shatkay H."/>
            <person name="Dew I."/>
            <person name="Miller J.R."/>
            <person name="Flanigan M.J."/>
            <person name="Edwards N.J."/>
            <person name="Bolanos R."/>
            <person name="Fasulo D."/>
            <person name="Halldorsson B.V."/>
            <person name="Hannenhalli S."/>
            <person name="Turner R."/>
            <person name="Yooseph S."/>
            <person name="Lu F."/>
            <person name="Nusskern D.R."/>
            <person name="Shue B.C."/>
            <person name="Zheng X.H."/>
            <person name="Zhong F."/>
            <person name="Delcher A.L."/>
            <person name="Huson D.H."/>
            <person name="Kravitz S.A."/>
            <person name="Mouchard L."/>
            <person name="Reinert K."/>
            <person name="Remington K.A."/>
            <person name="Clark A.G."/>
            <person name="Waterman M.S."/>
            <person name="Eichler E.E."/>
            <person name="Adams M.D."/>
            <person name="Hunkapiller M.W."/>
            <person name="Myers E.W."/>
            <person name="Venter J.C."/>
        </authorList>
    </citation>
    <scope>NUCLEOTIDE SEQUENCE [LARGE SCALE GENOMIC DNA]</scope>
</reference>
<reference key="6">
    <citation type="journal article" date="2004" name="Genome Res.">
        <title>The status, quality, and expansion of the NIH full-length cDNA project: the Mammalian Gene Collection (MGC).</title>
        <authorList>
            <consortium name="The MGC Project Team"/>
        </authorList>
    </citation>
    <scope>NUCLEOTIDE SEQUENCE [LARGE SCALE MRNA]</scope>
</reference>
<reference key="7">
    <citation type="journal article" date="1997" name="Eur. J. Hum. Genet.">
        <title>BOR and BO syndromes are allelic defects of EYA1.</title>
        <authorList>
            <person name="Vincent C."/>
            <person name="Kalatzis V."/>
            <person name="Abdelhak S."/>
            <person name="Chaib H."/>
            <person name="Compain S."/>
            <person name="Helias J."/>
            <person name="Vaneecloo F.M."/>
            <person name="Petit C."/>
        </authorList>
    </citation>
    <scope>INVOLVEMENT IN BOS1</scope>
</reference>
<reference key="8">
    <citation type="journal article" date="2001" name="Hum. Genet.">
        <title>Oto-facio-cervical (OFC) syndrome is a contiguous gene deletion syndrome involving EYA1: molecular analysis confirms allelism with BOR syndrome and further narrows the Duane syndrome critical region to 1 cM.</title>
        <authorList>
            <person name="Rickard S."/>
            <person name="Parker M."/>
            <person name="van't Hoff W."/>
            <person name="Barnicoat A."/>
            <person name="Russell-Eggitt I."/>
            <person name="Winter R.M."/>
            <person name="Bitner-Glindzicz M."/>
        </authorList>
    </citation>
    <scope>INVOLVEMENT IN OTFCS1</scope>
</reference>
<reference key="9">
    <citation type="journal article" date="2002" name="J. Muscle Res. Cell Motil.">
        <title>Six and Eya expression during human somitogenesis and MyoD gene family activation.</title>
        <authorList>
            <person name="Fougerousse F."/>
            <person name="Durand M."/>
            <person name="Lopez S."/>
            <person name="Suel L."/>
            <person name="Demignon J."/>
            <person name="Thornton C."/>
            <person name="Ozaki H."/>
            <person name="Kawakami K."/>
            <person name="Barbet P."/>
            <person name="Beckmann J.S."/>
            <person name="Maire P."/>
        </authorList>
    </citation>
    <scope>SUBCELLULAR LOCATION</scope>
    <scope>DEVELOPMENTAL STAGE</scope>
</reference>
<reference key="10">
    <citation type="journal article" date="2006" name="Ann. Hum. Genet.">
        <title>Point mutation of an EYA1-gene splice site in a patient with oto-facio-cervical syndrome.</title>
        <authorList>
            <person name="Estefania E."/>
            <person name="Ramirez-Camacho R."/>
            <person name="Gomar M."/>
            <person name="Trinidad A."/>
            <person name="Arellano B."/>
            <person name="Garcia-Berrocal J.R."/>
            <person name="Verdaguer J.M."/>
            <person name="Vilches C."/>
        </authorList>
    </citation>
    <scope>INVOLVEMENT IN OTFCS1</scope>
</reference>
<reference key="11">
    <citation type="journal article" date="2006" name="Am. J. Med. Genet. A">
        <title>Identification of a novel EYA1 mutation presenting in a newborn with laryngomalacia, glossoptosis, retrognathia, and pectus excavatum.</title>
        <authorList>
            <person name="Spruijt L."/>
            <person name="Hoefsloot L.H."/>
            <person name="van Schaijk G.H.W.H."/>
            <person name="van Waardenburg D."/>
            <person name="Kremer B."/>
            <person name="Brackel H.J.L."/>
            <person name="de Die-Smulders C.E.M."/>
        </authorList>
    </citation>
    <scope>INVOLVEMENT IN BOS1</scope>
</reference>
<reference key="12">
    <citation type="journal article" date="2009" name="Nature">
        <title>Tyrosine dephosphorylation of H2AX modulates apoptosis and survival decisions.</title>
        <authorList>
            <person name="Cook P.J."/>
            <person name="Ju B.G."/>
            <person name="Telese F."/>
            <person name="Wang X."/>
            <person name="Glass C.K."/>
            <person name="Rosenfeld M.G."/>
        </authorList>
    </citation>
    <scope>FUNCTION</scope>
    <scope>CATALYTIC ACTIVITY</scope>
    <scope>SUBCELLULAR LOCATION</scope>
    <scope>MUTAGENESIS OF ASP-328</scope>
</reference>
<reference key="13">
    <citation type="journal article" date="1997" name="Genet. Test.">
        <title>Branchio-oto-renal syndrome: identification of novel mutations, molecular characterization, mutation distribution, and prospects for genetic testing.</title>
        <authorList>
            <person name="Kumar S."/>
            <person name="Deffenbacher K."/>
            <person name="Cremers C.W.R.J."/>
            <person name="Van Camp G."/>
            <person name="Kimberling W.J."/>
        </authorList>
    </citation>
    <scope>VARIANT BOR1 GLN-440</scope>
</reference>
<reference key="14">
    <citation type="journal article" date="2000" name="Hum. Mol. Genet.">
        <title>Mutations of a human homologue of the Drosophila eyes absent gene (EYA1) detected in patients with congenital cataracts and ocular anterior segment anomalies.</title>
        <authorList>
            <person name="Azuma N."/>
            <person name="Hirakiyama A."/>
            <person name="Inoue T."/>
            <person name="Asaka A."/>
            <person name="Yamada M."/>
        </authorList>
    </citation>
    <scope>VARIANTS ASA LYS-363 AND GLY-547</scope>
    <scope>VARIANT BOR1 SER-426</scope>
</reference>
<reference key="15">
    <citation type="journal article" date="2000" name="J. Med. Genet.">
        <title>Importance of clinical evaluation and molecular testing in the branchio-oto-renal (BOR) syndrome and overlapping phenotypes.</title>
        <authorList>
            <person name="Rickard S."/>
            <person name="Boxer M."/>
            <person name="Trompeter R."/>
            <person name="Bitner-Glindzicz M."/>
        </authorList>
    </citation>
    <scope>VARIANT BOR1 PRO-583</scope>
</reference>
<reference key="16">
    <citation type="journal article" date="2001" name="J. Hum. Genet.">
        <title>Genetic features of hearing loss associated with ear anomalies: PDS and EYA1 mutation analysis.</title>
        <authorList>
            <person name="Namba A."/>
            <person name="Abe S."/>
            <person name="Shinkawa H."/>
            <person name="Kimberling W.J."/>
            <person name="Usami S."/>
        </authorList>
    </citation>
    <scope>VARIANT BOR1 GLY-429</scope>
</reference>
<reference key="17">
    <citation type="journal article" date="2003" name="Acta Oto-Laryngol.">
        <title>Mutation of the EYA1 gene in patients with branchio-oto syndrome.</title>
        <authorList>
            <person name="Yashima T."/>
            <person name="Noguchi Y."/>
            <person name="Ishikawa K."/>
            <person name="Mizusawa H."/>
            <person name="Kitamura K."/>
        </authorList>
    </citation>
    <scope>VARIANT BOS1 GLY-242</scope>
</reference>
<reference key="18">
    <citation type="journal article" date="2011" name="Hum. Mutat.">
        <title>Mutation screening of the EYA1, SIX1, and SIX5 genes in a large cohort of patients harboring branchio-oto-renal syndrome calls into question the pathogenic role of SIX5 mutations.</title>
        <authorList>
            <person name="Krug P."/>
            <person name="Moriniere V."/>
            <person name="Marlin S."/>
            <person name="Koubi V."/>
            <person name="Gabriel H.D."/>
            <person name="Colin E."/>
            <person name="Bonneau D."/>
            <person name="Salomon R."/>
            <person name="Antignac C."/>
            <person name="Heidet L."/>
        </authorList>
    </citation>
    <scope>VARIANTS BOR1 SER-95; SER-140; VAL-363; GLN-440; PRO-514; CYS-527 AND THR-569</scope>
</reference>
<reference key="19">
    <citation type="journal article" date="2013" name="Hum. Genet.">
        <title>Whole exome sequencing in dominant cataract identifies a new causative factor, CRYBA2, and a variety of novel alleles in known genes.</title>
        <authorList>
            <person name="Reis L.M."/>
            <person name="Tyler R.C."/>
            <person name="Muheisen S."/>
            <person name="Raggio V."/>
            <person name="Salviati L."/>
            <person name="Han D.P."/>
            <person name="Costakos D."/>
            <person name="Yonath H."/>
            <person name="Hall S."/>
            <person name="Power P."/>
            <person name="Semina E.V."/>
        </authorList>
    </citation>
    <scope>VARIANT LYS-41</scope>
</reference>
<keyword id="KW-0010">Activator</keyword>
<keyword id="KW-0025">Alternative splicing</keyword>
<keyword id="KW-0156">Chromatin regulator</keyword>
<keyword id="KW-0963">Cytoplasm</keyword>
<keyword id="KW-0209">Deafness</keyword>
<keyword id="KW-0217">Developmental protein</keyword>
<keyword id="KW-0225">Disease variant</keyword>
<keyword id="KW-0227">DNA damage</keyword>
<keyword id="KW-0234">DNA repair</keyword>
<keyword id="KW-0378">Hydrolase</keyword>
<keyword id="KW-0991">Intellectual disability</keyword>
<keyword id="KW-0460">Magnesium</keyword>
<keyword id="KW-0479">Metal-binding</keyword>
<keyword id="KW-0539">Nucleus</keyword>
<keyword id="KW-0904">Protein phosphatase</keyword>
<keyword id="KW-1267">Proteomics identification</keyword>
<keyword id="KW-1185">Reference proteome</keyword>
<keyword id="KW-0804">Transcription</keyword>
<keyword id="KW-0805">Transcription regulation</keyword>
<keyword id="KW-0832">Ubl conjugation</keyword>
<proteinExistence type="evidence at protein level"/>
<protein>
    <recommendedName>
        <fullName evidence="20">Protein phosphatase EYA1</fullName>
        <ecNumber evidence="14">3.1.3.16</ecNumber>
        <ecNumber evidence="14">3.1.3.48</ecNumber>
    </recommendedName>
    <alternativeName>
        <fullName>Eyes absent homolog 1</fullName>
    </alternativeName>
</protein>
<accession>Q99502</accession>
<accession>A6NHQ0</accession>
<accession>G5E9R4</accession>
<accession>Q0P516</accession>
<accession>Q8WX80</accession>
<gene>
    <name type="primary">EYA1</name>
</gene>